<evidence type="ECO:0000250" key="1">
    <source>
        <dbReference type="UniProtKB" id="A1L271"/>
    </source>
</evidence>
<evidence type="ECO:0000250" key="2">
    <source>
        <dbReference type="UniProtKB" id="P62881"/>
    </source>
</evidence>
<evidence type="ECO:0000269" key="3">
    <source>
    </source>
</evidence>
<evidence type="ECO:0000269" key="4">
    <source>
    </source>
</evidence>
<evidence type="ECO:0000269" key="5">
    <source>
    </source>
</evidence>
<evidence type="ECO:0000269" key="6">
    <source>
    </source>
</evidence>
<evidence type="ECO:0000269" key="7">
    <source>
    </source>
</evidence>
<evidence type="ECO:0000269" key="8">
    <source>
    </source>
</evidence>
<evidence type="ECO:0000303" key="9">
    <source>
    </source>
</evidence>
<evidence type="ECO:0000303" key="10">
    <source>
    </source>
</evidence>
<evidence type="ECO:0000303" key="11">
    <source>
    </source>
</evidence>
<evidence type="ECO:0000303" key="12">
    <source>
    </source>
</evidence>
<evidence type="ECO:0000303" key="13">
    <source ref="3"/>
</evidence>
<evidence type="ECO:0000305" key="14"/>
<evidence type="ECO:0007744" key="15">
    <source>
        <dbReference type="PDB" id="7EWP"/>
    </source>
</evidence>
<evidence type="ECO:0007744" key="16">
    <source>
        <dbReference type="PDB" id="7EWR"/>
    </source>
</evidence>
<evidence type="ECO:0007829" key="17">
    <source>
        <dbReference type="PDB" id="8SGL"/>
    </source>
</evidence>
<evidence type="ECO:0007829" key="18">
    <source>
        <dbReference type="PDB" id="8SH9"/>
    </source>
</evidence>
<evidence type="ECO:0007829" key="19">
    <source>
        <dbReference type="PDB" id="8SHE"/>
    </source>
</evidence>
<evidence type="ECO:0007829" key="20">
    <source>
        <dbReference type="PDB" id="8SHG"/>
    </source>
</evidence>
<evidence type="ECO:0007829" key="21">
    <source>
        <dbReference type="PDB" id="8SHN"/>
    </source>
</evidence>
<evidence type="ECO:0007829" key="22">
    <source>
        <dbReference type="PDB" id="8SHO"/>
    </source>
</evidence>
<evidence type="ECO:0007829" key="23">
    <source>
        <dbReference type="PDB" id="8SHT"/>
    </source>
</evidence>
<feature type="chain" id="PRO_0000127705" description="Guanine nucleotide-binding protein subunit beta-5">
    <location>
        <begin position="1"/>
        <end position="395"/>
    </location>
</feature>
<feature type="repeat" description="WD 1">
    <location>
        <begin position="103"/>
        <end position="142"/>
    </location>
</feature>
<feature type="repeat" description="WD 2">
    <location>
        <begin position="145"/>
        <end position="184"/>
    </location>
</feature>
<feature type="repeat" description="WD 3">
    <location>
        <begin position="193"/>
        <end position="234"/>
    </location>
</feature>
<feature type="repeat" description="WD 4">
    <location>
        <begin position="236"/>
        <end position="278"/>
    </location>
</feature>
<feature type="repeat" description="WD 5">
    <location>
        <begin position="279"/>
        <end position="318"/>
    </location>
</feature>
<feature type="repeat" description="WD 6">
    <location>
        <begin position="320"/>
        <end position="362"/>
    </location>
</feature>
<feature type="repeat" description="WD 7">
    <location>
        <begin position="365"/>
        <end position="394"/>
    </location>
</feature>
<feature type="splice variant" id="VSP_008765" description="In isoform 2 and isoform 3." evidence="9 10 11 12 13">
    <location>
        <begin position="1"/>
        <end position="42"/>
    </location>
</feature>
<feature type="splice variant" id="VSP_039101" description="In isoform 3." evidence="9">
    <location>
        <begin position="140"/>
        <end position="209"/>
    </location>
</feature>
<feature type="sequence variant" id="VAR_077994" description="In LDMLS2; severe, but incomplete loss of activation of RGS9 GTPase activator activity, affecting the deactivation of D(2) dopamine receptor-mediated signaling; decreased stability; decreased RGS9 stabilization; dbSNP:rs761399728." evidence="5 6">
    <original>S</original>
    <variation>L</variation>
    <location>
        <position position="123"/>
    </location>
</feature>
<feature type="sequence variant" id="VAR_049270" description="In dbSNP:rs34637551.">
    <original>A</original>
    <variation>V</variation>
    <location>
        <position position="213"/>
    </location>
</feature>
<feature type="sequence conflict" description="In Ref. 4; BAG37312." evidence="14" ref="4">
    <original>D</original>
    <variation>G</variation>
    <location>
        <position position="223"/>
    </location>
</feature>
<feature type="strand" evidence="17">
    <location>
        <begin position="97"/>
        <end position="99"/>
    </location>
</feature>
<feature type="strand" evidence="17">
    <location>
        <begin position="108"/>
        <end position="112"/>
    </location>
</feature>
<feature type="strand" evidence="17">
    <location>
        <begin position="121"/>
        <end position="126"/>
    </location>
</feature>
<feature type="strand" evidence="17">
    <location>
        <begin position="128"/>
        <end position="130"/>
    </location>
</feature>
<feature type="strand" evidence="17">
    <location>
        <begin position="134"/>
        <end position="136"/>
    </location>
</feature>
<feature type="strand" evidence="17">
    <location>
        <begin position="142"/>
        <end position="144"/>
    </location>
</feature>
<feature type="strand" evidence="17">
    <location>
        <begin position="146"/>
        <end position="148"/>
    </location>
</feature>
<feature type="strand" evidence="17">
    <location>
        <begin position="150"/>
        <end position="155"/>
    </location>
</feature>
<feature type="strand" evidence="17">
    <location>
        <begin position="157"/>
        <end position="166"/>
    </location>
</feature>
<feature type="strand" evidence="19">
    <location>
        <begin position="172"/>
        <end position="174"/>
    </location>
</feature>
<feature type="helix" evidence="19">
    <location>
        <begin position="175"/>
        <end position="177"/>
    </location>
</feature>
<feature type="strand" evidence="17">
    <location>
        <begin position="180"/>
        <end position="182"/>
    </location>
</feature>
<feature type="turn" evidence="17">
    <location>
        <begin position="184"/>
        <end position="187"/>
    </location>
</feature>
<feature type="strand" evidence="21">
    <location>
        <begin position="198"/>
        <end position="203"/>
    </location>
</feature>
<feature type="strand" evidence="19">
    <location>
        <begin position="209"/>
        <end position="213"/>
    </location>
</feature>
<feature type="strand" evidence="18">
    <location>
        <begin position="221"/>
        <end position="223"/>
    </location>
</feature>
<feature type="turn" evidence="18">
    <location>
        <begin position="224"/>
        <end position="227"/>
    </location>
</feature>
<feature type="strand" evidence="18">
    <location>
        <begin position="228"/>
        <end position="231"/>
    </location>
</feature>
<feature type="strand" evidence="18">
    <location>
        <begin position="242"/>
        <end position="244"/>
    </location>
</feature>
<feature type="turn" evidence="20">
    <location>
        <begin position="249"/>
        <end position="251"/>
    </location>
</feature>
<feature type="strand" evidence="18">
    <location>
        <begin position="252"/>
        <end position="257"/>
    </location>
</feature>
<feature type="strand" evidence="18">
    <location>
        <begin position="264"/>
        <end position="267"/>
    </location>
</feature>
<feature type="turn" evidence="18">
    <location>
        <begin position="268"/>
        <end position="271"/>
    </location>
</feature>
<feature type="strand" evidence="18">
    <location>
        <begin position="272"/>
        <end position="275"/>
    </location>
</feature>
<feature type="strand" evidence="19">
    <location>
        <begin position="286"/>
        <end position="289"/>
    </location>
</feature>
<feature type="strand" evidence="19">
    <location>
        <begin position="291"/>
        <end position="299"/>
    </location>
</feature>
<feature type="turn" evidence="22">
    <location>
        <begin position="301"/>
        <end position="303"/>
    </location>
</feature>
<feature type="strand" evidence="19">
    <location>
        <begin position="307"/>
        <end position="309"/>
    </location>
</feature>
<feature type="turn" evidence="19">
    <location>
        <begin position="310"/>
        <end position="312"/>
    </location>
</feature>
<feature type="strand" evidence="17">
    <location>
        <begin position="313"/>
        <end position="319"/>
    </location>
</feature>
<feature type="strand" evidence="17">
    <location>
        <begin position="328"/>
        <end position="331"/>
    </location>
</feature>
<feature type="strand" evidence="23">
    <location>
        <begin position="335"/>
        <end position="339"/>
    </location>
</feature>
<feature type="strand" evidence="17">
    <location>
        <begin position="342"/>
        <end position="351"/>
    </location>
</feature>
<feature type="strand" evidence="17">
    <location>
        <begin position="353"/>
        <end position="355"/>
    </location>
</feature>
<feature type="strand" evidence="17">
    <location>
        <begin position="361"/>
        <end position="363"/>
    </location>
</feature>
<feature type="strand" evidence="23">
    <location>
        <begin position="386"/>
        <end position="389"/>
    </location>
</feature>
<comment type="function">
    <text evidence="1 2 6">Enhances GTPase-activating protein (GAP) activity of regulator of G protein signaling (RGS) proteins, such as RGS7 and RGS9, hence involved in the termination of the signaling initiated by the G protein coupled receptors (GPCRs) by accelerating the GTP hydrolysis on the G-alpha subunits, thereby promoting their inactivation (PubMed:27677260). Increases RGS7 GTPase-activating protein (GAP) activity, thereby regulating mood and cognition (By similarity). Increases RGS9 GTPase-activating protein (GAP) activity, hence contributes to the deactivation of G protein signaling initiated by D(2) dopamine receptors (PubMed:27677260). May play an important role in neuronal signaling, including in the parasympathetic, but not sympathetic, control of heart rate (By similarity).</text>
</comment>
<comment type="subunit">
    <text evidence="3 4 6 7">Component of a complex composed of RGS9 (isoform RGS9-1), GNB5 and RGS9BP; within this complex, the presence of GNB5 stabilizes both itself and RGS9 and increases RGS9 GTPase-activating protein (GAP) activity (PubMed:27677260). Interacts with RGS7, forming the RGS7-GNB5 complex; within this complex, the presence of GNB5 increases RGS7 GTPase-activating protein (GAP) activity (PubMed:34815401). Interacts with GPR158; promotes the GTPase activator activity of the RGS7-GNB5 complex in absence of glycine, in contrast GTPase activator activity of the RGS7-GNB5 complex is inhibited in presence of glycine (PubMed:10339615, PubMed:10521509, PubMed:34815401). Interacts with RGS6 (PubMed:10339615, PubMed:10521509).</text>
</comment>
<comment type="interaction">
    <interactant intactId="EBI-713325">
        <id>O14775</id>
    </interactant>
    <interactant intactId="EBI-357275">
        <id>Q99471</id>
        <label>PFDN5</label>
    </interactant>
    <organismsDiffer>false</organismsDiffer>
    <experiments>2</experiments>
</comment>
<comment type="interaction">
    <interactant intactId="EBI-713325">
        <id>O14775</id>
    </interactant>
    <interactant intactId="EBI-6426927">
        <id>P49758</id>
        <label>RGS6</label>
    </interactant>
    <organismsDiffer>false</organismsDiffer>
    <experiments>2</experiments>
</comment>
<comment type="interaction">
    <interactant intactId="EBI-713325">
        <id>O14775</id>
    </interactant>
    <interactant intactId="EBI-6426975">
        <id>O75916</id>
        <label>RGS9</label>
    </interactant>
    <organismsDiffer>false</organismsDiffer>
    <experiments>2</experiments>
</comment>
<comment type="subcellular location">
    <subcellularLocation>
        <location evidence="2">Membrane</location>
    </subcellularLocation>
</comment>
<comment type="alternative products">
    <event type="alternative splicing"/>
    <isoform>
        <id>O14775-1</id>
        <name>1</name>
        <name>Long</name>
        <name>Beta-5L</name>
        <sequence type="displayed"/>
    </isoform>
    <isoform>
        <id>O14775-2</id>
        <name>2</name>
        <sequence type="described" ref="VSP_008765"/>
    </isoform>
    <isoform>
        <id>O14775-3</id>
        <name>3</name>
        <sequence type="described" ref="VSP_008765 VSP_039101"/>
    </isoform>
</comment>
<comment type="tissue specificity">
    <text evidence="8">Widely expressed.</text>
</comment>
<comment type="disease" evidence="5">
    <disease id="DI-04883">
        <name>Lodder-Merla syndrome, type 1, with impaired intellectual development and cardiac arrhythmia</name>
        <acronym>LDMLS1</acronym>
        <description>An autosomal recessive multisystem disorder characterized by delayed psychomotor development, severe intellectual disability with poor or absent speech, and bradycardia and/or cardiac sinus arrhythmias. Additional features include visual abnormalities, seizures, hypotonia, and gastric reflux.</description>
        <dbReference type="MIM" id="617173"/>
    </disease>
    <text>The disease is caused by variants affecting the gene represented in this entry.</text>
</comment>
<comment type="disease" evidence="5 6">
    <disease id="DI-04882">
        <name>Lodder-Merla syndrome, type 2, with developmental delay and with or without cardiac arrhythmia</name>
        <acronym>LDMLS2</acronym>
        <description>An autosomal recessive neurodevelopmental disorder characterized by speech impairment and variable expressivity of attention deficit-hyperactivity disorder. Some patients manifest developmental and motor delay, hypotonia, and sinus-node dysfunction.</description>
        <dbReference type="MIM" id="617182"/>
    </disease>
    <text>The disease is caused by variants affecting the gene represented in this entry.</text>
</comment>
<comment type="similarity">
    <text evidence="14">Belongs to the WD repeat G protein beta family.</text>
</comment>
<dbReference type="EMBL" id="AF017656">
    <property type="protein sequence ID" value="AAC63826.1"/>
    <property type="molecule type" value="mRNA"/>
</dbReference>
<dbReference type="EMBL" id="AL117471">
    <property type="protein sequence ID" value="CAB55946.1"/>
    <property type="molecule type" value="mRNA"/>
</dbReference>
<dbReference type="EMBL" id="AF501885">
    <property type="protein sequence ID" value="AAM15921.1"/>
    <property type="molecule type" value="mRNA"/>
</dbReference>
<dbReference type="EMBL" id="AF300650">
    <property type="protein sequence ID" value="AAG18444.1"/>
    <property type="molecule type" value="mRNA"/>
</dbReference>
<dbReference type="EMBL" id="AK314775">
    <property type="protein sequence ID" value="BAG37312.1"/>
    <property type="molecule type" value="mRNA"/>
</dbReference>
<dbReference type="EMBL" id="BC013997">
    <property type="protein sequence ID" value="AAH13997.1"/>
    <property type="molecule type" value="mRNA"/>
</dbReference>
<dbReference type="CCDS" id="CCDS10149.1">
    <molecule id="O14775-1"/>
</dbReference>
<dbReference type="CCDS" id="CCDS45261.1">
    <molecule id="O14775-2"/>
</dbReference>
<dbReference type="PIR" id="T17256">
    <property type="entry name" value="T17256"/>
</dbReference>
<dbReference type="RefSeq" id="NP_006569.1">
    <molecule id="O14775-2"/>
    <property type="nucleotide sequence ID" value="NM_006578.4"/>
</dbReference>
<dbReference type="RefSeq" id="NP_057278.2">
    <molecule id="O14775-1"/>
    <property type="nucleotide sequence ID" value="NM_016194.3"/>
</dbReference>
<dbReference type="PDB" id="7EWP">
    <property type="method" value="EM"/>
    <property type="resolution" value="4.30 A"/>
    <property type="chains" value="D=1-395"/>
</dbReference>
<dbReference type="PDB" id="7EWR">
    <property type="method" value="EM"/>
    <property type="resolution" value="4.70 A"/>
    <property type="chains" value="D/F=1-395"/>
</dbReference>
<dbReference type="PDB" id="8SG8">
    <property type="method" value="EM"/>
    <property type="resolution" value="3.00 A"/>
    <property type="chains" value="N=1-395"/>
</dbReference>
<dbReference type="PDB" id="8SG9">
    <property type="method" value="EM"/>
    <property type="resolution" value="2.90 A"/>
    <property type="chains" value="N=1-395"/>
</dbReference>
<dbReference type="PDB" id="8SGC">
    <property type="method" value="EM"/>
    <property type="resolution" value="2.90 A"/>
    <property type="chains" value="N=1-395"/>
</dbReference>
<dbReference type="PDB" id="8SGL">
    <property type="method" value="EM"/>
    <property type="resolution" value="2.90 A"/>
    <property type="chains" value="N=1-395"/>
</dbReference>
<dbReference type="PDB" id="8SH9">
    <property type="method" value="EM"/>
    <property type="resolution" value="2.70 A"/>
    <property type="chains" value="N=1-395"/>
</dbReference>
<dbReference type="PDB" id="8SHA">
    <property type="method" value="EM"/>
    <property type="resolution" value="3.00 A"/>
    <property type="chains" value="N=1-395"/>
</dbReference>
<dbReference type="PDB" id="8SHD">
    <property type="method" value="EM"/>
    <property type="resolution" value="2.90 A"/>
    <property type="chains" value="N=1-395"/>
</dbReference>
<dbReference type="PDB" id="8SHE">
    <property type="method" value="EM"/>
    <property type="resolution" value="2.80 A"/>
    <property type="chains" value="N=1-395"/>
</dbReference>
<dbReference type="PDB" id="8SHF">
    <property type="method" value="EM"/>
    <property type="resolution" value="3.00 A"/>
    <property type="chains" value="N=1-395"/>
</dbReference>
<dbReference type="PDB" id="8SHG">
    <property type="method" value="EM"/>
    <property type="resolution" value="2.80 A"/>
    <property type="chains" value="N=1-395"/>
</dbReference>
<dbReference type="PDB" id="8SHL">
    <property type="method" value="EM"/>
    <property type="resolution" value="3.00 A"/>
    <property type="chains" value="N=1-395"/>
</dbReference>
<dbReference type="PDB" id="8SHN">
    <property type="method" value="EM"/>
    <property type="resolution" value="2.80 A"/>
    <property type="chains" value="N=1-395"/>
</dbReference>
<dbReference type="PDB" id="8SHO">
    <property type="method" value="EM"/>
    <property type="resolution" value="3.00 A"/>
    <property type="chains" value="N=1-395"/>
</dbReference>
<dbReference type="PDB" id="8SHP">
    <property type="method" value="EM"/>
    <property type="resolution" value="3.00 A"/>
    <property type="chains" value="N=1-395"/>
</dbReference>
<dbReference type="PDB" id="8SHQ">
    <property type="method" value="EM"/>
    <property type="resolution" value="2.90 A"/>
    <property type="chains" value="N=1-395"/>
</dbReference>
<dbReference type="PDB" id="8SHT">
    <property type="method" value="EM"/>
    <property type="resolution" value="3.00 A"/>
    <property type="chains" value="N=1-395"/>
</dbReference>
<dbReference type="PDBsum" id="7EWP"/>
<dbReference type="PDBsum" id="7EWR"/>
<dbReference type="PDBsum" id="8SG8"/>
<dbReference type="PDBsum" id="8SG9"/>
<dbReference type="PDBsum" id="8SGC"/>
<dbReference type="PDBsum" id="8SGL"/>
<dbReference type="PDBsum" id="8SH9"/>
<dbReference type="PDBsum" id="8SHA"/>
<dbReference type="PDBsum" id="8SHD"/>
<dbReference type="PDBsum" id="8SHE"/>
<dbReference type="PDBsum" id="8SHF"/>
<dbReference type="PDBsum" id="8SHG"/>
<dbReference type="PDBsum" id="8SHL"/>
<dbReference type="PDBsum" id="8SHN"/>
<dbReference type="PDBsum" id="8SHO"/>
<dbReference type="PDBsum" id="8SHP"/>
<dbReference type="PDBsum" id="8SHQ"/>
<dbReference type="PDBsum" id="8SHT"/>
<dbReference type="EMDB" id="EMD-31360"/>
<dbReference type="EMDB" id="EMD-31363"/>
<dbReference type="EMDB" id="EMD-31365"/>
<dbReference type="EMDB" id="EMD-31366"/>
<dbReference type="EMDB" id="EMD-40120"/>
<dbReference type="EMDB" id="EMD-40452"/>
<dbReference type="EMDB" id="EMD-40453"/>
<dbReference type="EMDB" id="EMD-40454"/>
<dbReference type="EMDB" id="EMD-40461"/>
<dbReference type="EMDB" id="EMD-40481"/>
<dbReference type="EMDB" id="EMD-40482"/>
<dbReference type="EMDB" id="EMD-40484"/>
<dbReference type="EMDB" id="EMD-40485"/>
<dbReference type="EMDB" id="EMD-40486"/>
<dbReference type="EMDB" id="EMD-40487"/>
<dbReference type="EMDB" id="EMD-40488"/>
<dbReference type="EMDB" id="EMD-40489"/>
<dbReference type="EMDB" id="EMD-40490"/>
<dbReference type="EMDB" id="EMD-40491"/>
<dbReference type="EMDB" id="EMD-40492"/>
<dbReference type="EMDB" id="EMD-40494"/>
<dbReference type="EMDB" id="EMD-43252"/>
<dbReference type="EMDB" id="EMD-43253"/>
<dbReference type="EMDB" id="EMD-43254"/>
<dbReference type="EMDB" id="EMD-47154"/>
<dbReference type="SMR" id="O14775"/>
<dbReference type="BioGRID" id="115920">
    <property type="interactions" value="49"/>
</dbReference>
<dbReference type="CORUM" id="O14775"/>
<dbReference type="FunCoup" id="O14775">
    <property type="interactions" value="1196"/>
</dbReference>
<dbReference type="IntAct" id="O14775">
    <property type="interactions" value="44"/>
</dbReference>
<dbReference type="MINT" id="O14775"/>
<dbReference type="STRING" id="9606.ENSP00000261837"/>
<dbReference type="GlyGen" id="O14775">
    <property type="glycosylation" value="1 site, 1 O-linked glycan (1 site)"/>
</dbReference>
<dbReference type="iPTMnet" id="O14775"/>
<dbReference type="PhosphoSitePlus" id="O14775"/>
<dbReference type="SwissPalm" id="O14775"/>
<dbReference type="BioMuta" id="GNB5"/>
<dbReference type="jPOST" id="O14775"/>
<dbReference type="MassIVE" id="O14775"/>
<dbReference type="PaxDb" id="9606-ENSP00000261837"/>
<dbReference type="PeptideAtlas" id="O14775"/>
<dbReference type="ProteomicsDB" id="48226">
    <molecule id="O14775-1"/>
</dbReference>
<dbReference type="ProteomicsDB" id="48227">
    <molecule id="O14775-2"/>
</dbReference>
<dbReference type="ProteomicsDB" id="48228">
    <molecule id="O14775-3"/>
</dbReference>
<dbReference type="Pumba" id="O14775"/>
<dbReference type="Antibodypedia" id="24930">
    <property type="antibodies" value="300 antibodies from 32 providers"/>
</dbReference>
<dbReference type="DNASU" id="10681"/>
<dbReference type="Ensembl" id="ENST00000261837.12">
    <molecule id="O14775-1"/>
    <property type="protein sequence ID" value="ENSP00000261837.7"/>
    <property type="gene ID" value="ENSG00000069966.19"/>
</dbReference>
<dbReference type="Ensembl" id="ENST00000358784.11">
    <molecule id="O14775-2"/>
    <property type="protein sequence ID" value="ENSP00000351635.7"/>
    <property type="gene ID" value="ENSG00000069966.19"/>
</dbReference>
<dbReference type="Ensembl" id="ENST00000396335.8">
    <molecule id="O14775-3"/>
    <property type="protein sequence ID" value="ENSP00000379626.4"/>
    <property type="gene ID" value="ENSG00000069966.19"/>
</dbReference>
<dbReference type="GeneID" id="10681"/>
<dbReference type="KEGG" id="hsa:10681"/>
<dbReference type="MANE-Select" id="ENST00000261837.12">
    <property type="protein sequence ID" value="ENSP00000261837.7"/>
    <property type="RefSeq nucleotide sequence ID" value="NM_016194.4"/>
    <property type="RefSeq protein sequence ID" value="NP_057278.2"/>
</dbReference>
<dbReference type="UCSC" id="uc002abr.2">
    <molecule id="O14775-1"/>
    <property type="organism name" value="human"/>
</dbReference>
<dbReference type="AGR" id="HGNC:4401"/>
<dbReference type="CTD" id="10681"/>
<dbReference type="DisGeNET" id="10681"/>
<dbReference type="GeneCards" id="GNB5"/>
<dbReference type="GeneReviews" id="GNB5"/>
<dbReference type="HGNC" id="HGNC:4401">
    <property type="gene designation" value="GNB5"/>
</dbReference>
<dbReference type="HPA" id="ENSG00000069966">
    <property type="expression patterns" value="Tissue enhanced (retina)"/>
</dbReference>
<dbReference type="MalaCards" id="GNB5"/>
<dbReference type="MIM" id="604447">
    <property type="type" value="gene"/>
</dbReference>
<dbReference type="MIM" id="617173">
    <property type="type" value="phenotype"/>
</dbReference>
<dbReference type="MIM" id="617182">
    <property type="type" value="phenotype"/>
</dbReference>
<dbReference type="neXtProt" id="NX_O14775"/>
<dbReference type="OpenTargets" id="ENSG00000069966"/>
<dbReference type="Orphanet" id="542306">
    <property type="disease" value="GNB5-related intellectual disability-cardiac arrhythmia syndrome"/>
</dbReference>
<dbReference type="PharmGKB" id="PA28780"/>
<dbReference type="VEuPathDB" id="HostDB:ENSG00000069966"/>
<dbReference type="eggNOG" id="KOG0286">
    <property type="taxonomic scope" value="Eukaryota"/>
</dbReference>
<dbReference type="GeneTree" id="ENSGT01000000214413"/>
<dbReference type="HOGENOM" id="CLU_000288_57_34_1"/>
<dbReference type="InParanoid" id="O14775"/>
<dbReference type="OMA" id="LDNKCTI"/>
<dbReference type="OrthoDB" id="10255630at2759"/>
<dbReference type="PAN-GO" id="O14775">
    <property type="GO annotations" value="5 GO annotations based on evolutionary models"/>
</dbReference>
<dbReference type="PhylomeDB" id="O14775"/>
<dbReference type="TreeFam" id="TF106149"/>
<dbReference type="PathwayCommons" id="O14775"/>
<dbReference type="Reactome" id="R-HSA-1296041">
    <property type="pathway name" value="Activation of G protein gated Potassium channels"/>
</dbReference>
<dbReference type="Reactome" id="R-HSA-202040">
    <property type="pathway name" value="G-protein activation"/>
</dbReference>
<dbReference type="Reactome" id="R-HSA-2514859">
    <molecule id="O14775-1"/>
    <property type="pathway name" value="Inactivation, recovery and regulation of the phototransduction cascade"/>
</dbReference>
<dbReference type="Reactome" id="R-HSA-381676">
    <property type="pathway name" value="Glucagon-like Peptide-1 (GLP1) regulates insulin secretion"/>
</dbReference>
<dbReference type="Reactome" id="R-HSA-392170">
    <property type="pathway name" value="ADP signalling through P2Y purinoceptor 12"/>
</dbReference>
<dbReference type="Reactome" id="R-HSA-392451">
    <property type="pathway name" value="G beta:gamma signalling through PI3Kgamma"/>
</dbReference>
<dbReference type="Reactome" id="R-HSA-392851">
    <property type="pathway name" value="Prostacyclin signalling through prostacyclin receptor"/>
</dbReference>
<dbReference type="Reactome" id="R-HSA-400042">
    <property type="pathway name" value="Adrenaline,noradrenaline inhibits insulin secretion"/>
</dbReference>
<dbReference type="Reactome" id="R-HSA-4086398">
    <property type="pathway name" value="Ca2+ pathway"/>
</dbReference>
<dbReference type="Reactome" id="R-HSA-416476">
    <property type="pathway name" value="G alpha (q) signalling events"/>
</dbReference>
<dbReference type="Reactome" id="R-HSA-416482">
    <property type="pathway name" value="G alpha (12/13) signalling events"/>
</dbReference>
<dbReference type="Reactome" id="R-HSA-418217">
    <property type="pathway name" value="G beta:gamma signalling through PLC beta"/>
</dbReference>
<dbReference type="Reactome" id="R-HSA-418555">
    <property type="pathway name" value="G alpha (s) signalling events"/>
</dbReference>
<dbReference type="Reactome" id="R-HSA-418592">
    <property type="pathway name" value="ADP signalling through P2Y purinoceptor 1"/>
</dbReference>
<dbReference type="Reactome" id="R-HSA-418594">
    <property type="pathway name" value="G alpha (i) signalling events"/>
</dbReference>
<dbReference type="Reactome" id="R-HSA-418597">
    <property type="pathway name" value="G alpha (z) signalling events"/>
</dbReference>
<dbReference type="Reactome" id="R-HSA-420092">
    <property type="pathway name" value="Glucagon-type ligand receptors"/>
</dbReference>
<dbReference type="Reactome" id="R-HSA-428930">
    <property type="pathway name" value="Thromboxane signalling through TP receptor"/>
</dbReference>
<dbReference type="Reactome" id="R-HSA-432040">
    <property type="pathway name" value="Vasopressin regulates renal water homeostasis via Aquaporins"/>
</dbReference>
<dbReference type="Reactome" id="R-HSA-456926">
    <property type="pathway name" value="Thrombin signalling through proteinase activated receptors (PARs)"/>
</dbReference>
<dbReference type="Reactome" id="R-HSA-500657">
    <property type="pathway name" value="Presynaptic function of Kainate receptors"/>
</dbReference>
<dbReference type="Reactome" id="R-HSA-6814122">
    <property type="pathway name" value="Cooperation of PDCL (PhLP1) and TRiC/CCT in G-protein beta folding"/>
</dbReference>
<dbReference type="Reactome" id="R-HSA-8964315">
    <property type="pathway name" value="G beta:gamma signalling through BTK"/>
</dbReference>
<dbReference type="Reactome" id="R-HSA-8964616">
    <property type="pathway name" value="G beta:gamma signalling through CDC42"/>
</dbReference>
<dbReference type="Reactome" id="R-HSA-9009391">
    <property type="pathway name" value="Extra-nuclear estrogen signaling"/>
</dbReference>
<dbReference type="Reactome" id="R-HSA-9634597">
    <property type="pathway name" value="GPER1 signaling"/>
</dbReference>
<dbReference type="Reactome" id="R-HSA-9660821">
    <property type="pathway name" value="ADORA2B mediated anti-inflammatory cytokines production"/>
</dbReference>
<dbReference type="Reactome" id="R-HSA-9856530">
    <property type="pathway name" value="High laminar flow shear stress activates signaling by PIEZO1 and PECAM1:CDH5:KDR in endothelial cells"/>
</dbReference>
<dbReference type="Reactome" id="R-HSA-997272">
    <property type="pathway name" value="Inhibition of voltage gated Ca2+ channels via Gbeta/gamma subunits"/>
</dbReference>
<dbReference type="SignaLink" id="O14775"/>
<dbReference type="SIGNOR" id="O14775"/>
<dbReference type="BioGRID-ORCS" id="10681">
    <property type="hits" value="8 hits in 1155 CRISPR screens"/>
</dbReference>
<dbReference type="CD-CODE" id="FB4E32DD">
    <property type="entry name" value="Presynaptic clusters and postsynaptic densities"/>
</dbReference>
<dbReference type="ChiTaRS" id="GNB5">
    <property type="organism name" value="human"/>
</dbReference>
<dbReference type="GeneWiki" id="GNB5"/>
<dbReference type="GenomeRNAi" id="10681"/>
<dbReference type="Pharos" id="O14775">
    <property type="development level" value="Tbio"/>
</dbReference>
<dbReference type="PRO" id="PR:O14775"/>
<dbReference type="Proteomes" id="UP000005640">
    <property type="component" value="Chromosome 15"/>
</dbReference>
<dbReference type="RNAct" id="O14775">
    <property type="molecule type" value="protein"/>
</dbReference>
<dbReference type="Bgee" id="ENSG00000069966">
    <property type="expression patterns" value="Expressed in middle temporal gyrus and 196 other cell types or tissues"/>
</dbReference>
<dbReference type="ExpressionAtlas" id="O14775">
    <property type="expression patterns" value="baseline and differential"/>
</dbReference>
<dbReference type="GO" id="GO:0051286">
    <property type="term" value="C:cell tip"/>
    <property type="evidence" value="ECO:0007669"/>
    <property type="project" value="Ensembl"/>
</dbReference>
<dbReference type="GO" id="GO:0005737">
    <property type="term" value="C:cytoplasm"/>
    <property type="evidence" value="ECO:0000318"/>
    <property type="project" value="GO_Central"/>
</dbReference>
<dbReference type="GO" id="GO:0005829">
    <property type="term" value="C:cytosol"/>
    <property type="evidence" value="ECO:0000314"/>
    <property type="project" value="UniProtKB"/>
</dbReference>
<dbReference type="GO" id="GO:0030425">
    <property type="term" value="C:dendrite"/>
    <property type="evidence" value="ECO:0007669"/>
    <property type="project" value="Ensembl"/>
</dbReference>
<dbReference type="GO" id="GO:1902773">
    <property type="term" value="C:GTPase activator complex"/>
    <property type="evidence" value="ECO:0000304"/>
    <property type="project" value="UniProtKB"/>
</dbReference>
<dbReference type="GO" id="GO:0005834">
    <property type="term" value="C:heterotrimeric G-protein complex"/>
    <property type="evidence" value="ECO:0000318"/>
    <property type="project" value="GO_Central"/>
</dbReference>
<dbReference type="GO" id="GO:0005634">
    <property type="term" value="C:nucleus"/>
    <property type="evidence" value="ECO:0007669"/>
    <property type="project" value="Ensembl"/>
</dbReference>
<dbReference type="GO" id="GO:0098688">
    <property type="term" value="C:parallel fiber to Purkinje cell synapse"/>
    <property type="evidence" value="ECO:0007669"/>
    <property type="project" value="Ensembl"/>
</dbReference>
<dbReference type="GO" id="GO:0045211">
    <property type="term" value="C:postsynaptic membrane"/>
    <property type="evidence" value="ECO:0007669"/>
    <property type="project" value="Ensembl"/>
</dbReference>
<dbReference type="GO" id="GO:0042734">
    <property type="term" value="C:presynaptic membrane"/>
    <property type="evidence" value="ECO:0007669"/>
    <property type="project" value="Ensembl"/>
</dbReference>
<dbReference type="GO" id="GO:0031682">
    <property type="term" value="F:G-protein gamma-subunit binding"/>
    <property type="evidence" value="ECO:0000353"/>
    <property type="project" value="UniProtKB"/>
</dbReference>
<dbReference type="GO" id="GO:0005096">
    <property type="term" value="F:GTPase activator activity"/>
    <property type="evidence" value="ECO:0000314"/>
    <property type="project" value="UniProtKB"/>
</dbReference>
<dbReference type="GO" id="GO:0003924">
    <property type="term" value="F:GTPase activity"/>
    <property type="evidence" value="ECO:0000303"/>
    <property type="project" value="UniProtKB"/>
</dbReference>
<dbReference type="GO" id="GO:0051087">
    <property type="term" value="F:protein-folding chaperone binding"/>
    <property type="evidence" value="ECO:0000353"/>
    <property type="project" value="UniProtKB"/>
</dbReference>
<dbReference type="GO" id="GO:0030159">
    <property type="term" value="F:signaling receptor complex adaptor activity"/>
    <property type="evidence" value="ECO:0000318"/>
    <property type="project" value="GO_Central"/>
</dbReference>
<dbReference type="GO" id="GO:1990603">
    <property type="term" value="P:dark adaptation"/>
    <property type="evidence" value="ECO:0007669"/>
    <property type="project" value="Ensembl"/>
</dbReference>
<dbReference type="GO" id="GO:0007212">
    <property type="term" value="P:G protein-coupled dopamine receptor signaling pathway"/>
    <property type="evidence" value="ECO:0000314"/>
    <property type="project" value="UniProtKB"/>
</dbReference>
<dbReference type="GO" id="GO:0036367">
    <property type="term" value="P:light adaption"/>
    <property type="evidence" value="ECO:0007669"/>
    <property type="project" value="Ensembl"/>
</dbReference>
<dbReference type="GO" id="GO:1901386">
    <property type="term" value="P:negative regulation of voltage-gated calcium channel activity"/>
    <property type="evidence" value="ECO:0000314"/>
    <property type="project" value="UniProtKB"/>
</dbReference>
<dbReference type="GO" id="GO:0043547">
    <property type="term" value="P:positive regulation of GTPase activity"/>
    <property type="evidence" value="ECO:0000314"/>
    <property type="project" value="UniProtKB"/>
</dbReference>
<dbReference type="GO" id="GO:0007165">
    <property type="term" value="P:signal transduction"/>
    <property type="evidence" value="ECO:0000303"/>
    <property type="project" value="UniProtKB"/>
</dbReference>
<dbReference type="CDD" id="cd00200">
    <property type="entry name" value="WD40"/>
    <property type="match status" value="1"/>
</dbReference>
<dbReference type="FunFam" id="2.130.10.10:FF:000020">
    <property type="entry name" value="Guanine nucleotide-binding protein beta subunit"/>
    <property type="match status" value="1"/>
</dbReference>
<dbReference type="Gene3D" id="2.130.10.10">
    <property type="entry name" value="YVTN repeat-like/Quinoprotein amine dehydrogenase"/>
    <property type="match status" value="1"/>
</dbReference>
<dbReference type="InterPro" id="IPR020472">
    <property type="entry name" value="G-protein_beta_WD-40_rep"/>
</dbReference>
<dbReference type="InterPro" id="IPR001632">
    <property type="entry name" value="Gprotein_B"/>
</dbReference>
<dbReference type="InterPro" id="IPR016346">
    <property type="entry name" value="Guanine_nucleotide-bd_bsu"/>
</dbReference>
<dbReference type="InterPro" id="IPR015943">
    <property type="entry name" value="WD40/YVTN_repeat-like_dom_sf"/>
</dbReference>
<dbReference type="InterPro" id="IPR019775">
    <property type="entry name" value="WD40_repeat_CS"/>
</dbReference>
<dbReference type="InterPro" id="IPR036322">
    <property type="entry name" value="WD40_repeat_dom_sf"/>
</dbReference>
<dbReference type="InterPro" id="IPR001680">
    <property type="entry name" value="WD40_rpt"/>
</dbReference>
<dbReference type="PANTHER" id="PTHR19850">
    <property type="entry name" value="GUANINE NUCLEOTIDE-BINDING PROTEIN BETA G PROTEIN BETA"/>
    <property type="match status" value="1"/>
</dbReference>
<dbReference type="Pfam" id="PF25391">
    <property type="entry name" value="WD40_Gbeta"/>
    <property type="match status" value="1"/>
</dbReference>
<dbReference type="PIRSF" id="PIRSF002394">
    <property type="entry name" value="GN-bd_beta"/>
    <property type="match status" value="1"/>
</dbReference>
<dbReference type="PRINTS" id="PR00319">
    <property type="entry name" value="GPROTEINB"/>
</dbReference>
<dbReference type="PRINTS" id="PR00320">
    <property type="entry name" value="GPROTEINBRPT"/>
</dbReference>
<dbReference type="SMART" id="SM00320">
    <property type="entry name" value="WD40"/>
    <property type="match status" value="7"/>
</dbReference>
<dbReference type="SUPFAM" id="SSF50978">
    <property type="entry name" value="WD40 repeat-like"/>
    <property type="match status" value="1"/>
</dbReference>
<dbReference type="PROSITE" id="PS00678">
    <property type="entry name" value="WD_REPEATS_1"/>
    <property type="match status" value="3"/>
</dbReference>
<dbReference type="PROSITE" id="PS50082">
    <property type="entry name" value="WD_REPEATS_2"/>
    <property type="match status" value="6"/>
</dbReference>
<dbReference type="PROSITE" id="PS50294">
    <property type="entry name" value="WD_REPEATS_REGION"/>
    <property type="match status" value="1"/>
</dbReference>
<proteinExistence type="evidence at protein level"/>
<reference key="1">
    <citation type="journal article" date="1998" name="Biochim. Biophys. Acta">
        <title>Cloning and tissue distribution of the human G protein beta 5 cDNA.</title>
        <authorList>
            <person name="Jones P.G."/>
            <person name="Lombardi S.J."/>
            <person name="Cockett M.I."/>
        </authorList>
    </citation>
    <scope>NUCLEOTIDE SEQUENCE [MRNA] (ISOFORM 2)</scope>
    <scope>TISSUE SPECIFICITY</scope>
</reference>
<reference key="2">
    <citation type="journal article" date="2001" name="Genome Res.">
        <title>Towards a catalog of human genes and proteins: sequencing and analysis of 500 novel complete protein coding human cDNAs.</title>
        <authorList>
            <person name="Wiemann S."/>
            <person name="Weil B."/>
            <person name="Wellenreuther R."/>
            <person name="Gassenhuber J."/>
            <person name="Glassl S."/>
            <person name="Ansorge W."/>
            <person name="Boecher M."/>
            <person name="Bloecker H."/>
            <person name="Bauersachs S."/>
            <person name="Blum H."/>
            <person name="Lauber J."/>
            <person name="Duesterhoeft A."/>
            <person name="Beyer A."/>
            <person name="Koehrer K."/>
            <person name="Strack N."/>
            <person name="Mewes H.-W."/>
            <person name="Ottenwaelder B."/>
            <person name="Obermaier B."/>
            <person name="Tampe J."/>
            <person name="Heubner D."/>
            <person name="Wambutt R."/>
            <person name="Korn B."/>
            <person name="Klein M."/>
            <person name="Poustka A."/>
        </authorList>
    </citation>
    <scope>NUCLEOTIDE SEQUENCE [LARGE SCALE MRNA] (ISOFORM 3)</scope>
    <source>
        <tissue>Uterus</tissue>
    </source>
</reference>
<reference key="3">
    <citation type="submission" date="2002-03" db="EMBL/GenBank/DDBJ databases">
        <title>cDNA clones of human proteins involved in signal transduction sequenced by the Guthrie cDNA resource center (www.cdna.org).</title>
        <authorList>
            <person name="Puhl H.L. III"/>
            <person name="Ikeda S.R."/>
            <person name="Aronstam R.S."/>
        </authorList>
    </citation>
    <scope>NUCLEOTIDE SEQUENCE [LARGE SCALE MRNA] (ISOFORMS 1 AND 2)</scope>
</reference>
<reference key="4">
    <citation type="journal article" date="2004" name="Nat. Genet.">
        <title>Complete sequencing and characterization of 21,243 full-length human cDNAs.</title>
        <authorList>
            <person name="Ota T."/>
            <person name="Suzuki Y."/>
            <person name="Nishikawa T."/>
            <person name="Otsuki T."/>
            <person name="Sugiyama T."/>
            <person name="Irie R."/>
            <person name="Wakamatsu A."/>
            <person name="Hayashi K."/>
            <person name="Sato H."/>
            <person name="Nagai K."/>
            <person name="Kimura K."/>
            <person name="Makita H."/>
            <person name="Sekine M."/>
            <person name="Obayashi M."/>
            <person name="Nishi T."/>
            <person name="Shibahara T."/>
            <person name="Tanaka T."/>
            <person name="Ishii S."/>
            <person name="Yamamoto J."/>
            <person name="Saito K."/>
            <person name="Kawai Y."/>
            <person name="Isono Y."/>
            <person name="Nakamura Y."/>
            <person name="Nagahari K."/>
            <person name="Murakami K."/>
            <person name="Yasuda T."/>
            <person name="Iwayanagi T."/>
            <person name="Wagatsuma M."/>
            <person name="Shiratori A."/>
            <person name="Sudo H."/>
            <person name="Hosoiri T."/>
            <person name="Kaku Y."/>
            <person name="Kodaira H."/>
            <person name="Kondo H."/>
            <person name="Sugawara M."/>
            <person name="Takahashi M."/>
            <person name="Kanda K."/>
            <person name="Yokoi T."/>
            <person name="Furuya T."/>
            <person name="Kikkawa E."/>
            <person name="Omura Y."/>
            <person name="Abe K."/>
            <person name="Kamihara K."/>
            <person name="Katsuta N."/>
            <person name="Sato K."/>
            <person name="Tanikawa M."/>
            <person name="Yamazaki M."/>
            <person name="Ninomiya K."/>
            <person name="Ishibashi T."/>
            <person name="Yamashita H."/>
            <person name="Murakawa K."/>
            <person name="Fujimori K."/>
            <person name="Tanai H."/>
            <person name="Kimata M."/>
            <person name="Watanabe M."/>
            <person name="Hiraoka S."/>
            <person name="Chiba Y."/>
            <person name="Ishida S."/>
            <person name="Ono Y."/>
            <person name="Takiguchi S."/>
            <person name="Watanabe S."/>
            <person name="Yosida M."/>
            <person name="Hotuta T."/>
            <person name="Kusano J."/>
            <person name="Kanehori K."/>
            <person name="Takahashi-Fujii A."/>
            <person name="Hara H."/>
            <person name="Tanase T.-O."/>
            <person name="Nomura Y."/>
            <person name="Togiya S."/>
            <person name="Komai F."/>
            <person name="Hara R."/>
            <person name="Takeuchi K."/>
            <person name="Arita M."/>
            <person name="Imose N."/>
            <person name="Musashino K."/>
            <person name="Yuuki H."/>
            <person name="Oshima A."/>
            <person name="Sasaki N."/>
            <person name="Aotsuka S."/>
            <person name="Yoshikawa Y."/>
            <person name="Matsunawa H."/>
            <person name="Ichihara T."/>
            <person name="Shiohata N."/>
            <person name="Sano S."/>
            <person name="Moriya S."/>
            <person name="Momiyama H."/>
            <person name="Satoh N."/>
            <person name="Takami S."/>
            <person name="Terashima Y."/>
            <person name="Suzuki O."/>
            <person name="Nakagawa S."/>
            <person name="Senoh A."/>
            <person name="Mizoguchi H."/>
            <person name="Goto Y."/>
            <person name="Shimizu F."/>
            <person name="Wakebe H."/>
            <person name="Hishigaki H."/>
            <person name="Watanabe T."/>
            <person name="Sugiyama A."/>
            <person name="Takemoto M."/>
            <person name="Kawakami B."/>
            <person name="Yamazaki M."/>
            <person name="Watanabe K."/>
            <person name="Kumagai A."/>
            <person name="Itakura S."/>
            <person name="Fukuzumi Y."/>
            <person name="Fujimori Y."/>
            <person name="Komiyama M."/>
            <person name="Tashiro H."/>
            <person name="Tanigami A."/>
            <person name="Fujiwara T."/>
            <person name="Ono T."/>
            <person name="Yamada K."/>
            <person name="Fujii Y."/>
            <person name="Ozaki K."/>
            <person name="Hirao M."/>
            <person name="Ohmori Y."/>
            <person name="Kawabata A."/>
            <person name="Hikiji T."/>
            <person name="Kobatake N."/>
            <person name="Inagaki H."/>
            <person name="Ikema Y."/>
            <person name="Okamoto S."/>
            <person name="Okitani R."/>
            <person name="Kawakami T."/>
            <person name="Noguchi S."/>
            <person name="Itoh T."/>
            <person name="Shigeta K."/>
            <person name="Senba T."/>
            <person name="Matsumura K."/>
            <person name="Nakajima Y."/>
            <person name="Mizuno T."/>
            <person name="Morinaga M."/>
            <person name="Sasaki M."/>
            <person name="Togashi T."/>
            <person name="Oyama M."/>
            <person name="Hata H."/>
            <person name="Watanabe M."/>
            <person name="Komatsu T."/>
            <person name="Mizushima-Sugano J."/>
            <person name="Satoh T."/>
            <person name="Shirai Y."/>
            <person name="Takahashi Y."/>
            <person name="Nakagawa K."/>
            <person name="Okumura K."/>
            <person name="Nagase T."/>
            <person name="Nomura N."/>
            <person name="Kikuchi H."/>
            <person name="Masuho Y."/>
            <person name="Yamashita R."/>
            <person name="Nakai K."/>
            <person name="Yada T."/>
            <person name="Nakamura Y."/>
            <person name="Ohara O."/>
            <person name="Isogai T."/>
            <person name="Sugano S."/>
        </authorList>
    </citation>
    <scope>NUCLEOTIDE SEQUENCE [LARGE SCALE MRNA] (ISOFORM 2)</scope>
    <source>
        <tissue>Cerebellum</tissue>
    </source>
</reference>
<reference key="5">
    <citation type="journal article" date="2004" name="Genome Res.">
        <title>The status, quality, and expansion of the NIH full-length cDNA project: the Mammalian Gene Collection (MGC).</title>
        <authorList>
            <consortium name="The MGC Project Team"/>
        </authorList>
    </citation>
    <scope>NUCLEOTIDE SEQUENCE [LARGE SCALE MRNA] (ISOFORM 2)</scope>
    <source>
        <tissue>Lymph</tissue>
    </source>
</reference>
<reference key="6">
    <citation type="journal article" date="1999" name="J. Biol. Chem.">
        <title>Regulators of G protein signaling 6 and 7. Purification of complexes with gbeta5 and assessment of their effects on g protein-mediated signaling pathways.</title>
        <authorList>
            <person name="Posner B.A."/>
            <person name="Gilman A.G."/>
            <person name="Harris B.A."/>
        </authorList>
    </citation>
    <scope>INTERACTION WITH RGS6 AND RGS7</scope>
</reference>
<reference key="7">
    <citation type="journal article" date="1999" name="Proc. Natl. Acad. Sci. U.S.A.">
        <title>Fidelity of G protein beta-subunit association by the G protein gamma-subunit-like domains of RGS6, RGS7, and RGS11.</title>
        <authorList>
            <person name="Snow B.E."/>
            <person name="Betts L."/>
            <person name="Mangion J."/>
            <person name="Sondek J."/>
            <person name="Siderovski D.P."/>
        </authorList>
    </citation>
    <scope>INTERACTION WITH RGS6 AND RGS7</scope>
</reference>
<reference key="8">
    <citation type="journal article" date="2016" name="Am. J. Hum. Genet.">
        <title>GNB5 mutations cause an autosomal-recessive multisystem syndrome with sinus bradycardia and cognitive disability.</title>
        <authorList>
            <person name="Lodder E.M."/>
            <person name="De Nittis P."/>
            <person name="Koopman C.D."/>
            <person name="Wiszniewski W."/>
            <person name="Moura de Souza C.F."/>
            <person name="Lahrouchi N."/>
            <person name="Guex N."/>
            <person name="Napolioni V."/>
            <person name="Tessadori F."/>
            <person name="Beekman L."/>
            <person name="Nannenberg E.A."/>
            <person name="Boualla L."/>
            <person name="Blom N.A."/>
            <person name="de Graaff W."/>
            <person name="Kamermans M."/>
            <person name="Cocciadiferro D."/>
            <person name="Malerba N."/>
            <person name="Mandriani B."/>
            <person name="Akdemir Z.H."/>
            <person name="Fish R.J."/>
            <person name="Eldomery M.K."/>
            <person name="Ratbi I."/>
            <person name="Wilde A.A."/>
            <person name="de Boer T."/>
            <person name="Simonds W.F."/>
            <person name="Neerman-Arbez M."/>
            <person name="Sutton V.R."/>
            <person name="Kok F."/>
            <person name="Lupski J.R."/>
            <person name="Reymond A."/>
            <person name="Bezzina C.R."/>
            <person name="Bakkers J."/>
            <person name="Merla G."/>
        </authorList>
    </citation>
    <scope>INVOLVEMENT IN LDMLS1</scope>
    <scope>INVOLVEMENT IN LDMLS2</scope>
    <scope>VARIANT LDMLS2 LEU-123</scope>
</reference>
<reference key="9">
    <citation type="journal article" date="2016" name="Genome Biol.">
        <title>GNB5 mutation causes a novel neuropsychiatric disorder featuring attention deficit hyperactivity disorder, severely impaired language development and normal cognition.</title>
        <authorList>
            <person name="Shamseldin H.E."/>
            <person name="Masuho I."/>
            <person name="Alenizi A."/>
            <person name="Alyamani S."/>
            <person name="Patil D.N."/>
            <person name="Ibrahim N."/>
            <person name="Martemyanov K.A."/>
            <person name="Alkuraya F.S."/>
        </authorList>
    </citation>
    <scope>INVOLVEMENT IN LDMLS2</scope>
    <scope>VARIANT LDMLS2 LEU-123</scope>
    <scope>FUNCTION</scope>
    <scope>CHARACTERIZATION OF VARIANT LDMLS2 LEU-123</scope>
</reference>
<reference evidence="15 16" key="10">
    <citation type="journal article" date="2021" name="Nat. Commun.">
        <title>Structure of the class C orphan GPCR GPR158 in complex with RGS7-Gbeta5.</title>
        <authorList>
            <person name="Jeong E."/>
            <person name="Kim Y."/>
            <person name="Jeong J."/>
            <person name="Cho Y."/>
        </authorList>
    </citation>
    <scope>STRUCTURE BY ELECTRON MICROSCOPY (4.30 ANGSTROMS) IN COMPLEX WITH GPR158 AND RGS7</scope>
</reference>
<sequence>MCDQTFLVNVFGSCDKCFKQRALRPVFKKSQQLSYCSTCAEIMATEGLHENETLASLKSEAESLKGKLEEERAKLHDVELHQVAERVEALGQFVMKTRRTLKGHGNKVLCMDWCKDKRRIVSSSQDGKVIVWDSFTTNKEHAVTMPCTWVMACAYAPSGCAIACGGLDNKCSVYPLTFDKNENMAAKKKSVAMHTNYLSACSFTNSDMQILTASGDGTCALWDVESGQLLQSFHGHGADVLCLDLAPSETGNTFVSGGCDKKAMVWDMRSGQCVQAFETHESDINSVRYYPSGDAFASGSDDATCRLYDLRADREVAIYSKESIIFGASSVDFSLSGRLLFAGYNDYTINVWDVLKGSRVSILFGHENRVSTLRVSPDGTAFCSGSWDHTLRVWA</sequence>
<accession>O14775</accession>
<accession>B2RBR5</accession>
<accession>Q9HAU9</accession>
<accession>Q9UFT3</accession>
<protein>
    <recommendedName>
        <fullName>Guanine nucleotide-binding protein subunit beta-5</fullName>
    </recommendedName>
    <alternativeName>
        <fullName>Gbeta5</fullName>
    </alternativeName>
    <alternativeName>
        <fullName>Transducin beta chain 5</fullName>
    </alternativeName>
</protein>
<name>GNB5_HUMAN</name>
<gene>
    <name type="primary">GNB5</name>
</gene>
<organism>
    <name type="scientific">Homo sapiens</name>
    <name type="common">Human</name>
    <dbReference type="NCBI Taxonomy" id="9606"/>
    <lineage>
        <taxon>Eukaryota</taxon>
        <taxon>Metazoa</taxon>
        <taxon>Chordata</taxon>
        <taxon>Craniata</taxon>
        <taxon>Vertebrata</taxon>
        <taxon>Euteleostomi</taxon>
        <taxon>Mammalia</taxon>
        <taxon>Eutheria</taxon>
        <taxon>Euarchontoglires</taxon>
        <taxon>Primates</taxon>
        <taxon>Haplorrhini</taxon>
        <taxon>Catarrhini</taxon>
        <taxon>Hominidae</taxon>
        <taxon>Homo</taxon>
    </lineage>
</organism>
<keyword id="KW-0002">3D-structure</keyword>
<keyword id="KW-0025">Alternative splicing</keyword>
<keyword id="KW-0225">Disease variant</keyword>
<keyword id="KW-0991">Intellectual disability</keyword>
<keyword id="KW-0472">Membrane</keyword>
<keyword id="KW-1267">Proteomics identification</keyword>
<keyword id="KW-1185">Reference proteome</keyword>
<keyword id="KW-0677">Repeat</keyword>
<keyword id="KW-0807">Transducer</keyword>
<keyword id="KW-0853">WD repeat</keyword>